<comment type="similarity">
    <text evidence="1">Belongs to the queuine tRNA-ribosyltransferase family.</text>
</comment>
<name>TGTL_THEAN</name>
<accession>Q4UBI4</accession>
<reference key="1">
    <citation type="journal article" date="2005" name="Science">
        <title>Genome of the host-cell transforming parasite Theileria annulata compared with T. parva.</title>
        <authorList>
            <person name="Pain A."/>
            <person name="Renauld H."/>
            <person name="Berriman M."/>
            <person name="Murphy L."/>
            <person name="Yeats C.A."/>
            <person name="Weir W."/>
            <person name="Kerhornou A."/>
            <person name="Aslett M."/>
            <person name="Bishop R."/>
            <person name="Bouchier C."/>
            <person name="Cochet M."/>
            <person name="Coulson R.M.R."/>
            <person name="Cronin A."/>
            <person name="de Villiers E.P."/>
            <person name="Fraser A."/>
            <person name="Fosker N."/>
            <person name="Gardner M."/>
            <person name="Goble A."/>
            <person name="Griffiths-Jones S."/>
            <person name="Harris D.E."/>
            <person name="Katzer F."/>
            <person name="Larke N."/>
            <person name="Lord A."/>
            <person name="Maser P."/>
            <person name="McKellar S."/>
            <person name="Mooney P."/>
            <person name="Morton F."/>
            <person name="Nene V."/>
            <person name="O'Neil S."/>
            <person name="Price C."/>
            <person name="Quail M.A."/>
            <person name="Rabbinowitsch E."/>
            <person name="Rawlings N.D."/>
            <person name="Rutter S."/>
            <person name="Saunders D."/>
            <person name="Seeger K."/>
            <person name="Shah T."/>
            <person name="Squares R."/>
            <person name="Squares S."/>
            <person name="Tivey A."/>
            <person name="Walker A.R."/>
            <person name="Woodward J."/>
            <person name="Dobbelaere D.A.E."/>
            <person name="Langsley G."/>
            <person name="Rajandream M.A."/>
            <person name="McKeever D."/>
            <person name="Shiels B."/>
            <person name="Tait A."/>
            <person name="Barrell B.G."/>
            <person name="Hall N."/>
        </authorList>
    </citation>
    <scope>NUCLEOTIDE SEQUENCE [LARGE SCALE GENOMIC DNA]</scope>
    <source>
        <strain>Ankara</strain>
    </source>
</reference>
<gene>
    <name type="ORF">TA18520</name>
</gene>
<protein>
    <recommendedName>
        <fullName>Queuine tRNA-ribosyltransferase-like protein</fullName>
    </recommendedName>
</protein>
<sequence>MDNYDESRVFFREMCKNNGVDFPYRRGVIMSELHTPCCPVVCKLILPDPLTIDYISKIQQKPFLCIQFCSVLPCLPILEEFEHRSKNETLSRHFVDYEGAITLLTFDELFNKYSKIEDNHFVFHMDSNKYLLNEHTSKKIIDLINPSMAFIPTLSLKHSERKKWSTRKRTRFNDLYQSYYETLLKCSNKTKLVKPIHPCIEHKDMGDFEAIEFPGFGFGESLNERYELIKEMGANLIGKELRIIQLKTGTPLEILHAVLLGFDVVISPYPEILSLQGCALSFELPSEIEDNCEPEYVLNLLNEKCKFIDGVYKDQINDIVDLKNSVYISDVETPMDEKSIMKESRAYVNHLLNCKEMDGNIILSAHNLYMYEMLFQRIRDSIENNTLVSFVHNFVKCNLKED</sequence>
<organism>
    <name type="scientific">Theileria annulata</name>
    <dbReference type="NCBI Taxonomy" id="5874"/>
    <lineage>
        <taxon>Eukaryota</taxon>
        <taxon>Sar</taxon>
        <taxon>Alveolata</taxon>
        <taxon>Apicomplexa</taxon>
        <taxon>Aconoidasida</taxon>
        <taxon>Piroplasmida</taxon>
        <taxon>Theileriidae</taxon>
        <taxon>Theileria</taxon>
    </lineage>
</organism>
<feature type="chain" id="PRO_0000295637" description="Queuine tRNA-ribosyltransferase-like protein">
    <location>
        <begin position="1"/>
        <end position="402"/>
    </location>
</feature>
<keyword id="KW-0328">Glycosyltransferase</keyword>
<keyword id="KW-1185">Reference proteome</keyword>
<keyword id="KW-0808">Transferase</keyword>
<evidence type="ECO:0000305" key="1"/>
<proteinExistence type="inferred from homology"/>
<dbReference type="EMBL" id="CR940352">
    <property type="protein sequence ID" value="CAI75817.1"/>
    <property type="molecule type" value="Genomic_DNA"/>
</dbReference>
<dbReference type="RefSeq" id="XP_955293.1">
    <property type="nucleotide sequence ID" value="XM_950200.1"/>
</dbReference>
<dbReference type="SMR" id="Q4UBI4"/>
<dbReference type="FunCoup" id="Q4UBI4">
    <property type="interactions" value="126"/>
</dbReference>
<dbReference type="STRING" id="5874.Q4UBI4"/>
<dbReference type="GeneID" id="3865064"/>
<dbReference type="KEGG" id="tan:TA18520"/>
<dbReference type="VEuPathDB" id="PiroplasmaDB:TA18520"/>
<dbReference type="eggNOG" id="KOG3909">
    <property type="taxonomic scope" value="Eukaryota"/>
</dbReference>
<dbReference type="InParanoid" id="Q4UBI4"/>
<dbReference type="OMA" id="FREMCKN"/>
<dbReference type="OrthoDB" id="27601at2759"/>
<dbReference type="Proteomes" id="UP000001950">
    <property type="component" value="Chromosome 3"/>
</dbReference>
<dbReference type="GO" id="GO:0016757">
    <property type="term" value="F:glycosyltransferase activity"/>
    <property type="evidence" value="ECO:0007669"/>
    <property type="project" value="UniProtKB-KW"/>
</dbReference>
<dbReference type="GO" id="GO:0101030">
    <property type="term" value="P:tRNA-guanine transglycosylation"/>
    <property type="evidence" value="ECO:0007669"/>
    <property type="project" value="UniProtKB-ARBA"/>
</dbReference>
<dbReference type="Gene3D" id="3.20.20.105">
    <property type="entry name" value="Queuine tRNA-ribosyltransferase-like"/>
    <property type="match status" value="1"/>
</dbReference>
<dbReference type="InterPro" id="IPR050852">
    <property type="entry name" value="Queuine_tRNA-ribosyltrfase"/>
</dbReference>
<dbReference type="InterPro" id="IPR036511">
    <property type="entry name" value="TGT-like_sf"/>
</dbReference>
<dbReference type="InterPro" id="IPR002616">
    <property type="entry name" value="tRNA_ribo_trans-like"/>
</dbReference>
<dbReference type="PANTHER" id="PTHR46064">
    <property type="entry name" value="QUEUINE TRNA-RIBOSYLTRANSFERASE ACCESSORY SUBUNIT 2"/>
    <property type="match status" value="1"/>
</dbReference>
<dbReference type="PANTHER" id="PTHR46064:SF1">
    <property type="entry name" value="QUEUINE TRNA-RIBOSYLTRANSFERASE ACCESSORY SUBUNIT 2"/>
    <property type="match status" value="1"/>
</dbReference>
<dbReference type="Pfam" id="PF01702">
    <property type="entry name" value="TGT"/>
    <property type="match status" value="1"/>
</dbReference>
<dbReference type="SUPFAM" id="SSF51713">
    <property type="entry name" value="tRNA-guanine transglycosylase"/>
    <property type="match status" value="1"/>
</dbReference>